<organism>
    <name type="scientific">Bacillus anthracis (strain CDC 684 / NRRL 3495)</name>
    <dbReference type="NCBI Taxonomy" id="568206"/>
    <lineage>
        <taxon>Bacteria</taxon>
        <taxon>Bacillati</taxon>
        <taxon>Bacillota</taxon>
        <taxon>Bacilli</taxon>
        <taxon>Bacillales</taxon>
        <taxon>Bacillaceae</taxon>
        <taxon>Bacillus</taxon>
        <taxon>Bacillus cereus group</taxon>
    </lineage>
</organism>
<keyword id="KW-1003">Cell membrane</keyword>
<keyword id="KW-0472">Membrane</keyword>
<keyword id="KW-0812">Transmembrane</keyword>
<keyword id="KW-1133">Transmembrane helix</keyword>
<proteinExistence type="inferred from homology"/>
<comment type="subcellular location">
    <subcellularLocation>
        <location evidence="1">Cell membrane</location>
        <topology evidence="1">Multi-pass membrane protein</topology>
    </subcellularLocation>
</comment>
<comment type="similarity">
    <text evidence="1">Belongs to the UPF0756 family.</text>
</comment>
<evidence type="ECO:0000255" key="1">
    <source>
        <dbReference type="HAMAP-Rule" id="MF_01874"/>
    </source>
</evidence>
<feature type="chain" id="PRO_0000388820" description="UPF0756 membrane protein BAMEG_4871">
    <location>
        <begin position="1"/>
        <end position="153"/>
    </location>
</feature>
<feature type="transmembrane region" description="Helical" evidence="1">
    <location>
        <begin position="8"/>
        <end position="28"/>
    </location>
</feature>
<feature type="transmembrane region" description="Helical" evidence="1">
    <location>
        <begin position="54"/>
        <end position="74"/>
    </location>
</feature>
<feature type="transmembrane region" description="Helical" evidence="1">
    <location>
        <begin position="87"/>
        <end position="107"/>
    </location>
</feature>
<feature type="transmembrane region" description="Helical" evidence="1">
    <location>
        <begin position="117"/>
        <end position="137"/>
    </location>
</feature>
<sequence length="153" mass="15998">MISQSTLFLFILLIIGLIAKNQSLTVAIGVLFLLKFTFLGDKVFPYLQTKGINLGVTVITIAVLVPIATGEIGFKQLGEAAKSYYAWIALASGVAVALLAKGGVQLLTTDPHITTALVFGTIIAVALFNGVAVGPLIGAGIAYAVMSIIQMFK</sequence>
<reference key="1">
    <citation type="submission" date="2008-10" db="EMBL/GenBank/DDBJ databases">
        <title>Genome sequence of Bacillus anthracis str. CDC 684.</title>
        <authorList>
            <person name="Dodson R.J."/>
            <person name="Munk A.C."/>
            <person name="Brettin T."/>
            <person name="Bruce D."/>
            <person name="Detter C."/>
            <person name="Tapia R."/>
            <person name="Han C."/>
            <person name="Sutton G."/>
            <person name="Sims D."/>
        </authorList>
    </citation>
    <scope>NUCLEOTIDE SEQUENCE [LARGE SCALE GENOMIC DNA]</scope>
    <source>
        <strain>CDC 684 / NRRL 3495</strain>
    </source>
</reference>
<name>Y4871_BACAC</name>
<dbReference type="EMBL" id="CP001215">
    <property type="protein sequence ID" value="ACP14765.1"/>
    <property type="molecule type" value="Genomic_DNA"/>
</dbReference>
<dbReference type="RefSeq" id="WP_000625507.1">
    <property type="nucleotide sequence ID" value="NC_012581.1"/>
</dbReference>
<dbReference type="KEGG" id="bah:BAMEG_4871"/>
<dbReference type="HOGENOM" id="CLU_125889_1_0_9"/>
<dbReference type="GO" id="GO:0005886">
    <property type="term" value="C:plasma membrane"/>
    <property type="evidence" value="ECO:0007669"/>
    <property type="project" value="UniProtKB-SubCell"/>
</dbReference>
<dbReference type="HAMAP" id="MF_01874">
    <property type="entry name" value="UPF0756"/>
    <property type="match status" value="1"/>
</dbReference>
<dbReference type="InterPro" id="IPR007382">
    <property type="entry name" value="UPF0756_TM"/>
</dbReference>
<dbReference type="PANTHER" id="PTHR38452">
    <property type="entry name" value="UPF0756 MEMBRANE PROTEIN YEAL"/>
    <property type="match status" value="1"/>
</dbReference>
<dbReference type="PANTHER" id="PTHR38452:SF1">
    <property type="entry name" value="UPF0756 MEMBRANE PROTEIN YEAL"/>
    <property type="match status" value="1"/>
</dbReference>
<dbReference type="Pfam" id="PF04284">
    <property type="entry name" value="DUF441"/>
    <property type="match status" value="1"/>
</dbReference>
<protein>
    <recommendedName>
        <fullName evidence="1">UPF0756 membrane protein BAMEG_4871</fullName>
    </recommendedName>
</protein>
<gene>
    <name type="ordered locus">BAMEG_4871</name>
</gene>
<accession>C3L8X4</accession>